<keyword id="KW-1003">Cell membrane</keyword>
<keyword id="KW-0204">Cytolysis</keyword>
<keyword id="KW-0472">Membrane</keyword>
<keyword id="KW-1185">Reference proteome</keyword>
<keyword id="KW-0812">Transmembrane</keyword>
<keyword id="KW-1133">Transmembrane helix</keyword>
<evidence type="ECO:0000255" key="1">
    <source>
        <dbReference type="HAMAP-Rule" id="MF_01142"/>
    </source>
</evidence>
<protein>
    <recommendedName>
        <fullName evidence="1">Antiholin-like protein LrgB</fullName>
    </recommendedName>
</protein>
<sequence length="230" mass="24349">MASTMTPYFGIVVSLIAYGIGTLLFKHSKGFFLFTPLFVAMVLGIVFLKVGNFTFEEYNTGGKMISFFLEPATIAFAIPLYKQVDKLKKYWWQILSAIVVGSICSVIVVFIVAKAIGLDTAVMNSMLPQAATTAIALPISESIGGIPAITSFAVIFNAVIVYALGALFLKTFRVKHPIAKGLALGTAGHALGVAVGIEMGEVEAAMASIAVTVVGVVTVVVIPMFMPFIG</sequence>
<comment type="function">
    <text evidence="1">Inhibits the expression or activity of extracellular murein hydrolases by interacting, possibly with LrgA, with the holin-like protein CidA. The LrgAB and CidA proteins may affect the proton motive force of the membrane. May be involved in programmed cell death (PCD), possibly triggering PCD in response to antibiotics and environmental stresses.</text>
</comment>
<comment type="subcellular location">
    <subcellularLocation>
        <location evidence="1">Cell membrane</location>
        <topology evidence="1">Multi-pass membrane protein</topology>
    </subcellularLocation>
</comment>
<comment type="similarity">
    <text evidence="1">Belongs to the CidB/LrgB family. LrgB subfamily.</text>
</comment>
<proteinExistence type="inferred from homology"/>
<organism>
    <name type="scientific">Bacillus anthracis</name>
    <dbReference type="NCBI Taxonomy" id="1392"/>
    <lineage>
        <taxon>Bacteria</taxon>
        <taxon>Bacillati</taxon>
        <taxon>Bacillota</taxon>
        <taxon>Bacilli</taxon>
        <taxon>Bacillales</taxon>
        <taxon>Bacillaceae</taxon>
        <taxon>Bacillus</taxon>
        <taxon>Bacillus cereus group</taxon>
    </lineage>
</organism>
<gene>
    <name evidence="1" type="primary">lrgB</name>
    <name type="ordered locus">BA_5689</name>
    <name type="ordered locus">GBAA_5689</name>
    <name type="ordered locus">BAS5293</name>
</gene>
<name>LRGB_BACAN</name>
<accession>Q81JL5</accession>
<accession>Q6HQ58</accession>
<accession>Q6KJJ9</accession>
<dbReference type="EMBL" id="AE016879">
    <property type="protein sequence ID" value="AAP29321.1"/>
    <property type="molecule type" value="Genomic_DNA"/>
</dbReference>
<dbReference type="EMBL" id="AE017334">
    <property type="protein sequence ID" value="AAT34845.1"/>
    <property type="molecule type" value="Genomic_DNA"/>
</dbReference>
<dbReference type="EMBL" id="AE017225">
    <property type="protein sequence ID" value="AAT57580.1"/>
    <property type="molecule type" value="Genomic_DNA"/>
</dbReference>
<dbReference type="RefSeq" id="NP_847835.1">
    <property type="nucleotide sequence ID" value="NC_003997.3"/>
</dbReference>
<dbReference type="RefSeq" id="WP_000168869.1">
    <property type="nucleotide sequence ID" value="NZ_WXXJ01000017.1"/>
</dbReference>
<dbReference type="RefSeq" id="YP_031530.1">
    <property type="nucleotide sequence ID" value="NC_005945.1"/>
</dbReference>
<dbReference type="STRING" id="261594.GBAA_5689"/>
<dbReference type="DNASU" id="1085429"/>
<dbReference type="GeneID" id="93005687"/>
<dbReference type="KEGG" id="ban:BA_5689"/>
<dbReference type="KEGG" id="bar:GBAA_5689"/>
<dbReference type="KEGG" id="bat:BAS5293"/>
<dbReference type="PATRIC" id="fig|198094.11.peg.5651"/>
<dbReference type="eggNOG" id="COG1346">
    <property type="taxonomic scope" value="Bacteria"/>
</dbReference>
<dbReference type="HOGENOM" id="CLU_082099_1_0_9"/>
<dbReference type="OMA" id="AVFVMFT"/>
<dbReference type="OrthoDB" id="9811701at2"/>
<dbReference type="Proteomes" id="UP000000427">
    <property type="component" value="Chromosome"/>
</dbReference>
<dbReference type="Proteomes" id="UP000000594">
    <property type="component" value="Chromosome"/>
</dbReference>
<dbReference type="GO" id="GO:0005886">
    <property type="term" value="C:plasma membrane"/>
    <property type="evidence" value="ECO:0007669"/>
    <property type="project" value="UniProtKB-SubCell"/>
</dbReference>
<dbReference type="GO" id="GO:0019835">
    <property type="term" value="P:cytolysis"/>
    <property type="evidence" value="ECO:0007669"/>
    <property type="project" value="UniProtKB-UniRule"/>
</dbReference>
<dbReference type="GO" id="GO:0031640">
    <property type="term" value="P:killing of cells of another organism"/>
    <property type="evidence" value="ECO:0007669"/>
    <property type="project" value="UniProtKB-KW"/>
</dbReference>
<dbReference type="GO" id="GO:0012501">
    <property type="term" value="P:programmed cell death"/>
    <property type="evidence" value="ECO:0007669"/>
    <property type="project" value="UniProtKB-UniRule"/>
</dbReference>
<dbReference type="HAMAP" id="MF_01142">
    <property type="entry name" value="LrgB"/>
    <property type="match status" value="1"/>
</dbReference>
<dbReference type="InterPro" id="IPR024891">
    <property type="entry name" value="Antiholin-like_LrgB"/>
</dbReference>
<dbReference type="InterPro" id="IPR007300">
    <property type="entry name" value="CidB/LrgB"/>
</dbReference>
<dbReference type="NCBIfam" id="NF003291">
    <property type="entry name" value="PRK04288.1"/>
    <property type="match status" value="1"/>
</dbReference>
<dbReference type="PANTHER" id="PTHR30249:SF0">
    <property type="entry name" value="PLASTIDAL GLYCOLATE_GLYCERATE TRANSLOCATOR 1, CHLOROPLASTIC"/>
    <property type="match status" value="1"/>
</dbReference>
<dbReference type="PANTHER" id="PTHR30249">
    <property type="entry name" value="PUTATIVE SEROTONIN TRANSPORTER"/>
    <property type="match status" value="1"/>
</dbReference>
<dbReference type="Pfam" id="PF04172">
    <property type="entry name" value="LrgB"/>
    <property type="match status" value="1"/>
</dbReference>
<reference key="1">
    <citation type="journal article" date="2003" name="Nature">
        <title>The genome sequence of Bacillus anthracis Ames and comparison to closely related bacteria.</title>
        <authorList>
            <person name="Read T.D."/>
            <person name="Peterson S.N."/>
            <person name="Tourasse N.J."/>
            <person name="Baillie L.W."/>
            <person name="Paulsen I.T."/>
            <person name="Nelson K.E."/>
            <person name="Tettelin H."/>
            <person name="Fouts D.E."/>
            <person name="Eisen J.A."/>
            <person name="Gill S.R."/>
            <person name="Holtzapple E.K."/>
            <person name="Okstad O.A."/>
            <person name="Helgason E."/>
            <person name="Rilstone J."/>
            <person name="Wu M."/>
            <person name="Kolonay J.F."/>
            <person name="Beanan M.J."/>
            <person name="Dodson R.J."/>
            <person name="Brinkac L.M."/>
            <person name="Gwinn M.L."/>
            <person name="DeBoy R.T."/>
            <person name="Madpu R."/>
            <person name="Daugherty S.C."/>
            <person name="Durkin A.S."/>
            <person name="Haft D.H."/>
            <person name="Nelson W.C."/>
            <person name="Peterson J.D."/>
            <person name="Pop M."/>
            <person name="Khouri H.M."/>
            <person name="Radune D."/>
            <person name="Benton J.L."/>
            <person name="Mahamoud Y."/>
            <person name="Jiang L."/>
            <person name="Hance I.R."/>
            <person name="Weidman J.F."/>
            <person name="Berry K.J."/>
            <person name="Plaut R.D."/>
            <person name="Wolf A.M."/>
            <person name="Watkins K.L."/>
            <person name="Nierman W.C."/>
            <person name="Hazen A."/>
            <person name="Cline R.T."/>
            <person name="Redmond C."/>
            <person name="Thwaite J.E."/>
            <person name="White O."/>
            <person name="Salzberg S.L."/>
            <person name="Thomason B."/>
            <person name="Friedlander A.M."/>
            <person name="Koehler T.M."/>
            <person name="Hanna P.C."/>
            <person name="Kolstoe A.-B."/>
            <person name="Fraser C.M."/>
        </authorList>
    </citation>
    <scope>NUCLEOTIDE SEQUENCE [LARGE SCALE GENOMIC DNA]</scope>
    <source>
        <strain>Ames / isolate Porton</strain>
    </source>
</reference>
<reference key="2">
    <citation type="journal article" date="2009" name="J. Bacteriol.">
        <title>The complete genome sequence of Bacillus anthracis Ames 'Ancestor'.</title>
        <authorList>
            <person name="Ravel J."/>
            <person name="Jiang L."/>
            <person name="Stanley S.T."/>
            <person name="Wilson M.R."/>
            <person name="Decker R.S."/>
            <person name="Read T.D."/>
            <person name="Worsham P."/>
            <person name="Keim P.S."/>
            <person name="Salzberg S.L."/>
            <person name="Fraser-Liggett C.M."/>
            <person name="Rasko D.A."/>
        </authorList>
    </citation>
    <scope>NUCLEOTIDE SEQUENCE [LARGE SCALE GENOMIC DNA]</scope>
    <source>
        <strain>Ames ancestor</strain>
    </source>
</reference>
<reference key="3">
    <citation type="submission" date="2004-01" db="EMBL/GenBank/DDBJ databases">
        <title>Complete genome sequence of Bacillus anthracis Sterne.</title>
        <authorList>
            <person name="Brettin T.S."/>
            <person name="Bruce D."/>
            <person name="Challacombe J.F."/>
            <person name="Gilna P."/>
            <person name="Han C."/>
            <person name="Hill K."/>
            <person name="Hitchcock P."/>
            <person name="Jackson P."/>
            <person name="Keim P."/>
            <person name="Longmire J."/>
            <person name="Lucas S."/>
            <person name="Okinaka R."/>
            <person name="Richardson P."/>
            <person name="Rubin E."/>
            <person name="Tice H."/>
        </authorList>
    </citation>
    <scope>NUCLEOTIDE SEQUENCE [LARGE SCALE GENOMIC DNA]</scope>
    <source>
        <strain>Sterne</strain>
    </source>
</reference>
<feature type="chain" id="PRO_0000217053" description="Antiholin-like protein LrgB">
    <location>
        <begin position="1"/>
        <end position="230"/>
    </location>
</feature>
<feature type="transmembrane region" description="Helical" evidence="1">
    <location>
        <begin position="5"/>
        <end position="25"/>
    </location>
</feature>
<feature type="transmembrane region" description="Helical" evidence="1">
    <location>
        <begin position="32"/>
        <end position="54"/>
    </location>
</feature>
<feature type="transmembrane region" description="Helical" evidence="1">
    <location>
        <begin position="64"/>
        <end position="81"/>
    </location>
</feature>
<feature type="transmembrane region" description="Helical" evidence="1">
    <location>
        <begin position="94"/>
        <end position="116"/>
    </location>
</feature>
<feature type="transmembrane region" description="Helical" evidence="1">
    <location>
        <begin position="143"/>
        <end position="165"/>
    </location>
</feature>
<feature type="transmembrane region" description="Helical" evidence="1">
    <location>
        <begin position="178"/>
        <end position="197"/>
    </location>
</feature>
<feature type="transmembrane region" description="Helical" evidence="1">
    <location>
        <begin position="207"/>
        <end position="229"/>
    </location>
</feature>